<reference key="1">
    <citation type="submission" date="2006-02" db="EMBL/GenBank/DDBJ databases">
        <title>Complete sequence of chromosome of Rhodoferax ferrireducens DSM 15236.</title>
        <authorList>
            <person name="Copeland A."/>
            <person name="Lucas S."/>
            <person name="Lapidus A."/>
            <person name="Barry K."/>
            <person name="Detter J.C."/>
            <person name="Glavina del Rio T."/>
            <person name="Hammon N."/>
            <person name="Israni S."/>
            <person name="Pitluck S."/>
            <person name="Brettin T."/>
            <person name="Bruce D."/>
            <person name="Han C."/>
            <person name="Tapia R."/>
            <person name="Gilna P."/>
            <person name="Kiss H."/>
            <person name="Schmutz J."/>
            <person name="Larimer F."/>
            <person name="Land M."/>
            <person name="Kyrpides N."/>
            <person name="Ivanova N."/>
            <person name="Richardson P."/>
        </authorList>
    </citation>
    <scope>NUCLEOTIDE SEQUENCE [LARGE SCALE GENOMIC DNA]</scope>
    <source>
        <strain>ATCC BAA-621 / DSM 15236 / T118</strain>
    </source>
</reference>
<comment type="subcellular location">
    <subcellularLocation>
        <location evidence="1">Cell membrane</location>
        <topology evidence="1">Multi-pass membrane protein</topology>
    </subcellularLocation>
</comment>
<comment type="similarity">
    <text evidence="1">Belongs to the UPF0391 family.</text>
</comment>
<protein>
    <recommendedName>
        <fullName evidence="1">UPF0391 membrane protein Rfer_1875</fullName>
    </recommendedName>
</protein>
<organism>
    <name type="scientific">Albidiferax ferrireducens (strain ATCC BAA-621 / DSM 15236 / T118)</name>
    <name type="common">Rhodoferax ferrireducens</name>
    <dbReference type="NCBI Taxonomy" id="338969"/>
    <lineage>
        <taxon>Bacteria</taxon>
        <taxon>Pseudomonadati</taxon>
        <taxon>Pseudomonadota</taxon>
        <taxon>Betaproteobacteria</taxon>
        <taxon>Burkholderiales</taxon>
        <taxon>Comamonadaceae</taxon>
        <taxon>Rhodoferax</taxon>
    </lineage>
</organism>
<keyword id="KW-1003">Cell membrane</keyword>
<keyword id="KW-0472">Membrane</keyword>
<keyword id="KW-1185">Reference proteome</keyword>
<keyword id="KW-0812">Transmembrane</keyword>
<keyword id="KW-1133">Transmembrane helix</keyword>
<gene>
    <name type="ordered locus">Rfer_1875</name>
</gene>
<dbReference type="EMBL" id="CP000267">
    <property type="protein sequence ID" value="ABD69601.1"/>
    <property type="molecule type" value="Genomic_DNA"/>
</dbReference>
<dbReference type="RefSeq" id="WP_011464169.1">
    <property type="nucleotide sequence ID" value="NC_007908.1"/>
</dbReference>
<dbReference type="STRING" id="338969.Rfer_1875"/>
<dbReference type="KEGG" id="rfr:Rfer_1875"/>
<dbReference type="eggNOG" id="COG5487">
    <property type="taxonomic scope" value="Bacteria"/>
</dbReference>
<dbReference type="HOGENOM" id="CLU_187346_0_1_4"/>
<dbReference type="Proteomes" id="UP000008332">
    <property type="component" value="Chromosome"/>
</dbReference>
<dbReference type="GO" id="GO:0005886">
    <property type="term" value="C:plasma membrane"/>
    <property type="evidence" value="ECO:0007669"/>
    <property type="project" value="UniProtKB-SubCell"/>
</dbReference>
<dbReference type="HAMAP" id="MF_01361">
    <property type="entry name" value="UPF0391"/>
    <property type="match status" value="1"/>
</dbReference>
<dbReference type="InterPro" id="IPR009760">
    <property type="entry name" value="DUF1328"/>
</dbReference>
<dbReference type="NCBIfam" id="NF010226">
    <property type="entry name" value="PRK13682.1-1"/>
    <property type="match status" value="1"/>
</dbReference>
<dbReference type="NCBIfam" id="NF010229">
    <property type="entry name" value="PRK13682.1-4"/>
    <property type="match status" value="1"/>
</dbReference>
<dbReference type="Pfam" id="PF07043">
    <property type="entry name" value="DUF1328"/>
    <property type="match status" value="1"/>
</dbReference>
<dbReference type="PIRSF" id="PIRSF036466">
    <property type="entry name" value="UCP036466"/>
    <property type="match status" value="1"/>
</dbReference>
<name>Y1875_ALBFT</name>
<evidence type="ECO:0000255" key="1">
    <source>
        <dbReference type="HAMAP-Rule" id="MF_01361"/>
    </source>
</evidence>
<accession>Q21XA2</accession>
<feature type="chain" id="PRO_0000256775" description="UPF0391 membrane protein Rfer_1875">
    <location>
        <begin position="1"/>
        <end position="54"/>
    </location>
</feature>
<feature type="transmembrane region" description="Helical" evidence="1">
    <location>
        <begin position="5"/>
        <end position="25"/>
    </location>
</feature>
<feature type="transmembrane region" description="Helical" evidence="1">
    <location>
        <begin position="30"/>
        <end position="50"/>
    </location>
</feature>
<sequence length="54" mass="5717">MLHYAVVFFVIALIAALFGFGGIAASAVSIGKILFIVFAILAVASFLFGLIKKR</sequence>
<proteinExistence type="inferred from homology"/>